<feature type="chain" id="PRO_0000180559" description="Glucose-6-phosphate isomerase, cytosolic 1">
    <location>
        <begin position="1"/>
        <end position="568"/>
    </location>
</feature>
<feature type="active site" description="Proton donor" evidence="1">
    <location>
        <position position="360"/>
    </location>
</feature>
<feature type="active site" evidence="1">
    <location>
        <position position="391"/>
    </location>
</feature>
<feature type="active site" evidence="1">
    <location>
        <position position="516"/>
    </location>
</feature>
<comment type="catalytic activity">
    <reaction>
        <text>alpha-D-glucose 6-phosphate = beta-D-fructose 6-phosphate</text>
        <dbReference type="Rhea" id="RHEA:11816"/>
        <dbReference type="ChEBI" id="CHEBI:57634"/>
        <dbReference type="ChEBI" id="CHEBI:58225"/>
        <dbReference type="EC" id="5.3.1.9"/>
    </reaction>
</comment>
<comment type="pathway">
    <text>Carbohydrate degradation; glycolysis; D-glyceraldehyde 3-phosphate and glycerone phosphate from D-glucose: step 2/4.</text>
</comment>
<comment type="subunit">
    <text evidence="1">Homodimer.</text>
</comment>
<comment type="subcellular location">
    <subcellularLocation>
        <location evidence="1">Cytoplasm</location>
    </subcellularLocation>
</comment>
<comment type="similarity">
    <text evidence="2">Belongs to the GPI family.</text>
</comment>
<proteinExistence type="inferred from homology"/>
<reference key="1">
    <citation type="journal article" date="1995" name="Syst. Bot.">
        <title>The same duplication accounts for the PgiC genes in Clarkia xantiana and C. lewisii (Onagraceae).</title>
        <authorList>
            <person name="Ford V.S."/>
            <person name="Thomas B.R."/>
            <person name="Gottlieb L.D."/>
        </authorList>
        <dbReference type="AGRICOLA" id="IND20466557"/>
    </citation>
    <scope>NUCLEOTIDE SEQUENCE [GENOMIC DNA]</scope>
</reference>
<reference key="2">
    <citation type="journal article" date="1996" name="Syst. Bot.">
        <title>Phylogenetic relationships among the sections of Clarkia (Onagraceae) inferred from the nucleotide sequences of PgiC.</title>
        <authorList>
            <person name="Gottlieb L.D."/>
            <person name="Ford V.S."/>
        </authorList>
        <dbReference type="AGRICOLA" id="IND20535960"/>
    </citation>
    <scope>NUCLEOTIDE SEQUENCE [GENOMIC DNA]</scope>
    <source>
        <strain>Population LDG 7436</strain>
    </source>
</reference>
<keyword id="KW-0963">Cytoplasm</keyword>
<keyword id="KW-0312">Gluconeogenesis</keyword>
<keyword id="KW-0324">Glycolysis</keyword>
<keyword id="KW-0413">Isomerase</keyword>
<organism>
    <name type="scientific">Clarkia xantiana</name>
    <name type="common">Gunsight clarkia</name>
    <dbReference type="NCBI Taxonomy" id="3938"/>
    <lineage>
        <taxon>Eukaryota</taxon>
        <taxon>Viridiplantae</taxon>
        <taxon>Streptophyta</taxon>
        <taxon>Embryophyta</taxon>
        <taxon>Tracheophyta</taxon>
        <taxon>Spermatophyta</taxon>
        <taxon>Magnoliopsida</taxon>
        <taxon>eudicotyledons</taxon>
        <taxon>Gunneridae</taxon>
        <taxon>Pentapetalae</taxon>
        <taxon>rosids</taxon>
        <taxon>malvids</taxon>
        <taxon>Myrtales</taxon>
        <taxon>Onagraceae</taxon>
        <taxon>Onagroideae</taxon>
        <taxon>Onagreae</taxon>
        <taxon>Clarkia</taxon>
    </lineage>
</organism>
<name>G6PI1_CLAXA</name>
<sequence>MASPALISETEAWKDLKAHLEGIKMIHLRELMGDTERCQSMMVEFDNIFLDYSRQQASPDTISKLYKLADAAHLKQKIDRMYNGDHINSTENRSVLHVALRAPRNSAICSDGKNVVPDVWNVLDKIKDFSDRVRNGSWIGATGKELKDVIAVGIGGSFLGPLFVHTALQTDPEASKNARGRELRFLANVDPIDVARNISGLNPETTLVVVVSKTFTTAETMLNARTLREWISSALGPSAVAKHMVAVSTNLPLVEKFGIDPNNAFAFWDWVGGRYSVCSAVGVLPLSLQYGFAVVEKFLQGAHSIDQHFSSAPFEKNIPVLLGLLSVWNVSFLGYPARAILPYSQALEKLAPHIQQVSMESNGKGVSIDGLPLPFESGEIDFGEPGTNGQHSFYQLIHQGRVIPCDFIGIVKSQQPVYLKGEVVNNHDELMSNFFAQPDALAYGKTPEQLKNENVSEHLIPHKTFTGNRPSISILLPTLDAYRIGQLLAIYEHRVAVQGFVWGINSFDQWGVELGKSLATQVRKQLHASRVKGEPVEGFNFSTKTLLTRYLEATSDVPADPSTLLPNI</sequence>
<gene>
    <name type="primary">PGIC1</name>
</gene>
<accession>P54240</accession>
<protein>
    <recommendedName>
        <fullName>Glucose-6-phosphate isomerase, cytosolic 1</fullName>
        <shortName>GPI</shortName>
        <ecNumber>5.3.1.9</ecNumber>
    </recommendedName>
    <alternativeName>
        <fullName>Phosphoglucose isomerase</fullName>
        <shortName>PGI</shortName>
    </alternativeName>
    <alternativeName>
        <fullName>Phosphohexose isomerase</fullName>
        <shortName>PHI</shortName>
    </alternativeName>
</protein>
<dbReference type="EC" id="5.3.1.9"/>
<dbReference type="EMBL" id="X80666">
    <property type="protein sequence ID" value="CAA56693.1"/>
    <property type="molecule type" value="Genomic_DNA"/>
</dbReference>
<dbReference type="EMBL" id="X89386">
    <property type="protein sequence ID" value="CAA61566.1"/>
    <property type="molecule type" value="Genomic_DNA"/>
</dbReference>
<dbReference type="PIR" id="S57830">
    <property type="entry name" value="S57830"/>
</dbReference>
<dbReference type="SMR" id="P54240"/>
<dbReference type="UniPathway" id="UPA00109">
    <property type="reaction ID" value="UER00181"/>
</dbReference>
<dbReference type="GO" id="GO:0005829">
    <property type="term" value="C:cytosol"/>
    <property type="evidence" value="ECO:0007669"/>
    <property type="project" value="TreeGrafter"/>
</dbReference>
<dbReference type="GO" id="GO:0097367">
    <property type="term" value="F:carbohydrate derivative binding"/>
    <property type="evidence" value="ECO:0007669"/>
    <property type="project" value="InterPro"/>
</dbReference>
<dbReference type="GO" id="GO:0004347">
    <property type="term" value="F:glucose-6-phosphate isomerase activity"/>
    <property type="evidence" value="ECO:0007669"/>
    <property type="project" value="UniProtKB-EC"/>
</dbReference>
<dbReference type="GO" id="GO:0048029">
    <property type="term" value="F:monosaccharide binding"/>
    <property type="evidence" value="ECO:0007669"/>
    <property type="project" value="TreeGrafter"/>
</dbReference>
<dbReference type="GO" id="GO:0006094">
    <property type="term" value="P:gluconeogenesis"/>
    <property type="evidence" value="ECO:0007669"/>
    <property type="project" value="UniProtKB-KW"/>
</dbReference>
<dbReference type="GO" id="GO:0051156">
    <property type="term" value="P:glucose 6-phosphate metabolic process"/>
    <property type="evidence" value="ECO:0007669"/>
    <property type="project" value="TreeGrafter"/>
</dbReference>
<dbReference type="GO" id="GO:0006096">
    <property type="term" value="P:glycolytic process"/>
    <property type="evidence" value="ECO:0007669"/>
    <property type="project" value="UniProtKB-UniPathway"/>
</dbReference>
<dbReference type="CDD" id="cd05015">
    <property type="entry name" value="SIS_PGI_1"/>
    <property type="match status" value="1"/>
</dbReference>
<dbReference type="CDD" id="cd05016">
    <property type="entry name" value="SIS_PGI_2"/>
    <property type="match status" value="1"/>
</dbReference>
<dbReference type="FunFam" id="1.10.1390.10:FF:000002">
    <property type="entry name" value="Glucose-6-phosphate isomerase"/>
    <property type="match status" value="1"/>
</dbReference>
<dbReference type="FunFam" id="3.40.50.10490:FF:000018">
    <property type="entry name" value="Glucose-6-phosphate isomerase"/>
    <property type="match status" value="1"/>
</dbReference>
<dbReference type="FunFam" id="3.40.50.10490:FF:000031">
    <property type="entry name" value="Glucose-6-phosphate isomerase"/>
    <property type="match status" value="1"/>
</dbReference>
<dbReference type="FunFam" id="3.40.50.10490:FF:000048">
    <property type="entry name" value="Glucose-6-phosphate isomerase"/>
    <property type="match status" value="1"/>
</dbReference>
<dbReference type="Gene3D" id="1.10.1390.10">
    <property type="match status" value="1"/>
</dbReference>
<dbReference type="Gene3D" id="3.40.50.10490">
    <property type="entry name" value="Glucose-6-phosphate isomerase like protein, domain 1"/>
    <property type="match status" value="2"/>
</dbReference>
<dbReference type="HAMAP" id="MF_00473">
    <property type="entry name" value="G6P_isomerase"/>
    <property type="match status" value="1"/>
</dbReference>
<dbReference type="InterPro" id="IPR001672">
    <property type="entry name" value="G6P_Isomerase"/>
</dbReference>
<dbReference type="InterPro" id="IPR023096">
    <property type="entry name" value="G6P_Isomerase_C"/>
</dbReference>
<dbReference type="InterPro" id="IPR018189">
    <property type="entry name" value="Phosphoglucose_isomerase_CS"/>
</dbReference>
<dbReference type="InterPro" id="IPR046348">
    <property type="entry name" value="SIS_dom_sf"/>
</dbReference>
<dbReference type="InterPro" id="IPR035476">
    <property type="entry name" value="SIS_PGI_1"/>
</dbReference>
<dbReference type="InterPro" id="IPR035482">
    <property type="entry name" value="SIS_PGI_2"/>
</dbReference>
<dbReference type="NCBIfam" id="NF001211">
    <property type="entry name" value="PRK00179.1"/>
    <property type="match status" value="1"/>
</dbReference>
<dbReference type="PANTHER" id="PTHR11469">
    <property type="entry name" value="GLUCOSE-6-PHOSPHATE ISOMERASE"/>
    <property type="match status" value="1"/>
</dbReference>
<dbReference type="PANTHER" id="PTHR11469:SF1">
    <property type="entry name" value="GLUCOSE-6-PHOSPHATE ISOMERASE"/>
    <property type="match status" value="1"/>
</dbReference>
<dbReference type="Pfam" id="PF00342">
    <property type="entry name" value="PGI"/>
    <property type="match status" value="1"/>
</dbReference>
<dbReference type="PRINTS" id="PR00662">
    <property type="entry name" value="G6PISOMERASE"/>
</dbReference>
<dbReference type="SUPFAM" id="SSF53697">
    <property type="entry name" value="SIS domain"/>
    <property type="match status" value="1"/>
</dbReference>
<dbReference type="PROSITE" id="PS00765">
    <property type="entry name" value="P_GLUCOSE_ISOMERASE_1"/>
    <property type="match status" value="1"/>
</dbReference>
<dbReference type="PROSITE" id="PS00174">
    <property type="entry name" value="P_GLUCOSE_ISOMERASE_2"/>
    <property type="match status" value="1"/>
</dbReference>
<dbReference type="PROSITE" id="PS51463">
    <property type="entry name" value="P_GLUCOSE_ISOMERASE_3"/>
    <property type="match status" value="1"/>
</dbReference>
<evidence type="ECO:0000250" key="1"/>
<evidence type="ECO:0000305" key="2"/>